<protein>
    <recommendedName>
        <fullName evidence="1">Large ribosomal subunit protein bL33c</fullName>
    </recommendedName>
    <alternativeName>
        <fullName evidence="2">50S ribosomal protein L33, chloroplastic</fullName>
    </alternativeName>
</protein>
<sequence length="66" mass="7748">MAKGKDVRIRVILECISCVRKGANEESTGISRYSTQKNRHNTPGQLEFKKFCRYCRKHTTHHEIKK</sequence>
<comment type="subcellular location">
    <subcellularLocation>
        <location>Plastid</location>
        <location>Chloroplast</location>
    </subcellularLocation>
</comment>
<comment type="similarity">
    <text evidence="1">Belongs to the bacterial ribosomal protein bL33 family.</text>
</comment>
<organism>
    <name type="scientific">Agrostis stolonifera</name>
    <name type="common">Creeping bentgrass</name>
    <dbReference type="NCBI Taxonomy" id="63632"/>
    <lineage>
        <taxon>Eukaryota</taxon>
        <taxon>Viridiplantae</taxon>
        <taxon>Streptophyta</taxon>
        <taxon>Embryophyta</taxon>
        <taxon>Tracheophyta</taxon>
        <taxon>Spermatophyta</taxon>
        <taxon>Magnoliopsida</taxon>
        <taxon>Liliopsida</taxon>
        <taxon>Poales</taxon>
        <taxon>Poaceae</taxon>
        <taxon>BOP clade</taxon>
        <taxon>Pooideae</taxon>
        <taxon>Poodae</taxon>
        <taxon>Poeae</taxon>
        <taxon>Poeae Chloroplast Group 1 (Aveneae type)</taxon>
        <taxon>Agrostidodinae</taxon>
        <taxon>Agrostidinae</taxon>
        <taxon>Agrostis</taxon>
    </lineage>
</organism>
<dbReference type="EMBL" id="EF115543">
    <property type="protein sequence ID" value="ABK79601.1"/>
    <property type="molecule type" value="Genomic_DNA"/>
</dbReference>
<dbReference type="RefSeq" id="YP_874757.1">
    <property type="nucleotide sequence ID" value="NC_008591.1"/>
</dbReference>
<dbReference type="GeneID" id="4525003"/>
<dbReference type="GO" id="GO:0009507">
    <property type="term" value="C:chloroplast"/>
    <property type="evidence" value="ECO:0007669"/>
    <property type="project" value="UniProtKB-SubCell"/>
</dbReference>
<dbReference type="GO" id="GO:1990904">
    <property type="term" value="C:ribonucleoprotein complex"/>
    <property type="evidence" value="ECO:0007669"/>
    <property type="project" value="UniProtKB-KW"/>
</dbReference>
<dbReference type="GO" id="GO:0005840">
    <property type="term" value="C:ribosome"/>
    <property type="evidence" value="ECO:0007669"/>
    <property type="project" value="UniProtKB-KW"/>
</dbReference>
<dbReference type="GO" id="GO:0003735">
    <property type="term" value="F:structural constituent of ribosome"/>
    <property type="evidence" value="ECO:0007669"/>
    <property type="project" value="InterPro"/>
</dbReference>
<dbReference type="GO" id="GO:0006412">
    <property type="term" value="P:translation"/>
    <property type="evidence" value="ECO:0007669"/>
    <property type="project" value="UniProtKB-UniRule"/>
</dbReference>
<dbReference type="Gene3D" id="2.20.28.120">
    <property type="entry name" value="Ribosomal protein L33"/>
    <property type="match status" value="1"/>
</dbReference>
<dbReference type="HAMAP" id="MF_00294">
    <property type="entry name" value="Ribosomal_bL33"/>
    <property type="match status" value="1"/>
</dbReference>
<dbReference type="InterPro" id="IPR001705">
    <property type="entry name" value="Ribosomal_bL33"/>
</dbReference>
<dbReference type="InterPro" id="IPR018264">
    <property type="entry name" value="Ribosomal_bL33_CS"/>
</dbReference>
<dbReference type="InterPro" id="IPR038584">
    <property type="entry name" value="Ribosomal_bL33_sf"/>
</dbReference>
<dbReference type="InterPro" id="IPR011332">
    <property type="entry name" value="Ribosomal_zn-bd"/>
</dbReference>
<dbReference type="NCBIfam" id="NF001764">
    <property type="entry name" value="PRK00504.1"/>
    <property type="match status" value="1"/>
</dbReference>
<dbReference type="NCBIfam" id="NF001860">
    <property type="entry name" value="PRK00595.1"/>
    <property type="match status" value="1"/>
</dbReference>
<dbReference type="NCBIfam" id="TIGR01023">
    <property type="entry name" value="rpmG_bact"/>
    <property type="match status" value="1"/>
</dbReference>
<dbReference type="PANTHER" id="PTHR43168">
    <property type="entry name" value="50S RIBOSOMAL PROTEIN L33, CHLOROPLASTIC"/>
    <property type="match status" value="1"/>
</dbReference>
<dbReference type="PANTHER" id="PTHR43168:SF2">
    <property type="entry name" value="LARGE RIBOSOMAL SUBUNIT PROTEIN BL33C"/>
    <property type="match status" value="1"/>
</dbReference>
<dbReference type="Pfam" id="PF00471">
    <property type="entry name" value="Ribosomal_L33"/>
    <property type="match status" value="1"/>
</dbReference>
<dbReference type="SUPFAM" id="SSF57829">
    <property type="entry name" value="Zn-binding ribosomal proteins"/>
    <property type="match status" value="1"/>
</dbReference>
<dbReference type="PROSITE" id="PS00582">
    <property type="entry name" value="RIBOSOMAL_L33"/>
    <property type="match status" value="1"/>
</dbReference>
<feature type="chain" id="PRO_0000276494" description="Large ribosomal subunit protein bL33c">
    <location>
        <begin position="1"/>
        <end position="66"/>
    </location>
</feature>
<geneLocation type="chloroplast"/>
<name>RK33_AGRST</name>
<accession>A1EA29</accession>
<proteinExistence type="inferred from homology"/>
<gene>
    <name evidence="1" type="primary">rpl33</name>
</gene>
<keyword id="KW-0150">Chloroplast</keyword>
<keyword id="KW-0934">Plastid</keyword>
<keyword id="KW-0687">Ribonucleoprotein</keyword>
<keyword id="KW-0689">Ribosomal protein</keyword>
<evidence type="ECO:0000255" key="1">
    <source>
        <dbReference type="HAMAP-Rule" id="MF_00294"/>
    </source>
</evidence>
<evidence type="ECO:0000305" key="2"/>
<reference key="1">
    <citation type="journal article" date="2007" name="Theor. Appl. Genet.">
        <title>Complete chloroplast genome sequences of Hordeum vulgare, Sorghum bicolor and Agrostis stolonifera, and comparative analyses with other grass genomes.</title>
        <authorList>
            <person name="Saski C."/>
            <person name="Lee S.-B."/>
            <person name="Fjellheim S."/>
            <person name="Guda C."/>
            <person name="Jansen R.K."/>
            <person name="Luo H."/>
            <person name="Tomkins J."/>
            <person name="Rognli O.A."/>
            <person name="Daniell H."/>
            <person name="Clarke J.L."/>
        </authorList>
    </citation>
    <scope>NUCLEOTIDE SEQUENCE [LARGE SCALE GENOMIC DNA]</scope>
    <source>
        <strain>cv. Penn A-4</strain>
    </source>
</reference>